<gene>
    <name evidence="6 11" type="primary">Tpk1</name>
</gene>
<reference key="1">
    <citation type="journal article" date="1999" name="J. Biol. Chem.">
        <title>Molecular cloning and expression of a mouse thiamin pyrophosphokinase cDNA.</title>
        <authorList>
            <person name="Nosaka K."/>
            <person name="Onozuka M."/>
            <person name="Nishino H."/>
            <person name="Nishimura H."/>
            <person name="Kawasaki Y."/>
            <person name="Ueyama H."/>
        </authorList>
    </citation>
    <scope>NUCLEOTIDE SEQUENCE [MRNA] (ISOFORM 1)</scope>
    <scope>FUNCTION</scope>
    <scope>SUBUNIT</scope>
    <scope>TISSUE SPECIFICITY</scope>
    <source>
        <tissue>Embryo</tissue>
    </source>
</reference>
<reference key="2">
    <citation type="journal article" date="2005" name="Science">
        <title>The transcriptional landscape of the mammalian genome.</title>
        <authorList>
            <person name="Carninci P."/>
            <person name="Kasukawa T."/>
            <person name="Katayama S."/>
            <person name="Gough J."/>
            <person name="Frith M.C."/>
            <person name="Maeda N."/>
            <person name="Oyama R."/>
            <person name="Ravasi T."/>
            <person name="Lenhard B."/>
            <person name="Wells C."/>
            <person name="Kodzius R."/>
            <person name="Shimokawa K."/>
            <person name="Bajic V.B."/>
            <person name="Brenner S.E."/>
            <person name="Batalov S."/>
            <person name="Forrest A.R."/>
            <person name="Zavolan M."/>
            <person name="Davis M.J."/>
            <person name="Wilming L.G."/>
            <person name="Aidinis V."/>
            <person name="Allen J.E."/>
            <person name="Ambesi-Impiombato A."/>
            <person name="Apweiler R."/>
            <person name="Aturaliya R.N."/>
            <person name="Bailey T.L."/>
            <person name="Bansal M."/>
            <person name="Baxter L."/>
            <person name="Beisel K.W."/>
            <person name="Bersano T."/>
            <person name="Bono H."/>
            <person name="Chalk A.M."/>
            <person name="Chiu K.P."/>
            <person name="Choudhary V."/>
            <person name="Christoffels A."/>
            <person name="Clutterbuck D.R."/>
            <person name="Crowe M.L."/>
            <person name="Dalla E."/>
            <person name="Dalrymple B.P."/>
            <person name="de Bono B."/>
            <person name="Della Gatta G."/>
            <person name="di Bernardo D."/>
            <person name="Down T."/>
            <person name="Engstrom P."/>
            <person name="Fagiolini M."/>
            <person name="Faulkner G."/>
            <person name="Fletcher C.F."/>
            <person name="Fukushima T."/>
            <person name="Furuno M."/>
            <person name="Futaki S."/>
            <person name="Gariboldi M."/>
            <person name="Georgii-Hemming P."/>
            <person name="Gingeras T.R."/>
            <person name="Gojobori T."/>
            <person name="Green R.E."/>
            <person name="Gustincich S."/>
            <person name="Harbers M."/>
            <person name="Hayashi Y."/>
            <person name="Hensch T.K."/>
            <person name="Hirokawa N."/>
            <person name="Hill D."/>
            <person name="Huminiecki L."/>
            <person name="Iacono M."/>
            <person name="Ikeo K."/>
            <person name="Iwama A."/>
            <person name="Ishikawa T."/>
            <person name="Jakt M."/>
            <person name="Kanapin A."/>
            <person name="Katoh M."/>
            <person name="Kawasawa Y."/>
            <person name="Kelso J."/>
            <person name="Kitamura H."/>
            <person name="Kitano H."/>
            <person name="Kollias G."/>
            <person name="Krishnan S.P."/>
            <person name="Kruger A."/>
            <person name="Kummerfeld S.K."/>
            <person name="Kurochkin I.V."/>
            <person name="Lareau L.F."/>
            <person name="Lazarevic D."/>
            <person name="Lipovich L."/>
            <person name="Liu J."/>
            <person name="Liuni S."/>
            <person name="McWilliam S."/>
            <person name="Madan Babu M."/>
            <person name="Madera M."/>
            <person name="Marchionni L."/>
            <person name="Matsuda H."/>
            <person name="Matsuzawa S."/>
            <person name="Miki H."/>
            <person name="Mignone F."/>
            <person name="Miyake S."/>
            <person name="Morris K."/>
            <person name="Mottagui-Tabar S."/>
            <person name="Mulder N."/>
            <person name="Nakano N."/>
            <person name="Nakauchi H."/>
            <person name="Ng P."/>
            <person name="Nilsson R."/>
            <person name="Nishiguchi S."/>
            <person name="Nishikawa S."/>
            <person name="Nori F."/>
            <person name="Ohara O."/>
            <person name="Okazaki Y."/>
            <person name="Orlando V."/>
            <person name="Pang K.C."/>
            <person name="Pavan W.J."/>
            <person name="Pavesi G."/>
            <person name="Pesole G."/>
            <person name="Petrovsky N."/>
            <person name="Piazza S."/>
            <person name="Reed J."/>
            <person name="Reid J.F."/>
            <person name="Ring B.Z."/>
            <person name="Ringwald M."/>
            <person name="Rost B."/>
            <person name="Ruan Y."/>
            <person name="Salzberg S.L."/>
            <person name="Sandelin A."/>
            <person name="Schneider C."/>
            <person name="Schoenbach C."/>
            <person name="Sekiguchi K."/>
            <person name="Semple C.A."/>
            <person name="Seno S."/>
            <person name="Sessa L."/>
            <person name="Sheng Y."/>
            <person name="Shibata Y."/>
            <person name="Shimada H."/>
            <person name="Shimada K."/>
            <person name="Silva D."/>
            <person name="Sinclair B."/>
            <person name="Sperling S."/>
            <person name="Stupka E."/>
            <person name="Sugiura K."/>
            <person name="Sultana R."/>
            <person name="Takenaka Y."/>
            <person name="Taki K."/>
            <person name="Tammoja K."/>
            <person name="Tan S.L."/>
            <person name="Tang S."/>
            <person name="Taylor M.S."/>
            <person name="Tegner J."/>
            <person name="Teichmann S.A."/>
            <person name="Ueda H.R."/>
            <person name="van Nimwegen E."/>
            <person name="Verardo R."/>
            <person name="Wei C.L."/>
            <person name="Yagi K."/>
            <person name="Yamanishi H."/>
            <person name="Zabarovsky E."/>
            <person name="Zhu S."/>
            <person name="Zimmer A."/>
            <person name="Hide W."/>
            <person name="Bult C."/>
            <person name="Grimmond S.M."/>
            <person name="Teasdale R.D."/>
            <person name="Liu E.T."/>
            <person name="Brusic V."/>
            <person name="Quackenbush J."/>
            <person name="Wahlestedt C."/>
            <person name="Mattick J.S."/>
            <person name="Hume D.A."/>
            <person name="Kai C."/>
            <person name="Sasaki D."/>
            <person name="Tomaru Y."/>
            <person name="Fukuda S."/>
            <person name="Kanamori-Katayama M."/>
            <person name="Suzuki M."/>
            <person name="Aoki J."/>
            <person name="Arakawa T."/>
            <person name="Iida J."/>
            <person name="Imamura K."/>
            <person name="Itoh M."/>
            <person name="Kato T."/>
            <person name="Kawaji H."/>
            <person name="Kawagashira N."/>
            <person name="Kawashima T."/>
            <person name="Kojima M."/>
            <person name="Kondo S."/>
            <person name="Konno H."/>
            <person name="Nakano K."/>
            <person name="Ninomiya N."/>
            <person name="Nishio T."/>
            <person name="Okada M."/>
            <person name="Plessy C."/>
            <person name="Shibata K."/>
            <person name="Shiraki T."/>
            <person name="Suzuki S."/>
            <person name="Tagami M."/>
            <person name="Waki K."/>
            <person name="Watahiki A."/>
            <person name="Okamura-Oho Y."/>
            <person name="Suzuki H."/>
            <person name="Kawai J."/>
            <person name="Hayashizaki Y."/>
        </authorList>
    </citation>
    <scope>NUCLEOTIDE SEQUENCE [LARGE SCALE MRNA] (ISOFORMS 1; 2 AND 3)</scope>
    <source>
        <strain>C57BL/6J</strain>
        <tissue>Colon</tissue>
        <tissue>Embryo</tissue>
        <tissue>Embryonic liver</tissue>
        <tissue>Hypothalamus</tissue>
    </source>
</reference>
<reference key="3">
    <citation type="journal article" date="2004" name="Genome Res.">
        <title>The status, quality, and expansion of the NIH full-length cDNA project: the Mammalian Gene Collection (MGC).</title>
        <authorList>
            <consortium name="The MGC Project Team"/>
        </authorList>
    </citation>
    <scope>NUCLEOTIDE SEQUENCE [LARGE SCALE MRNA] (ISOFORMS 1 AND 2)</scope>
    <source>
        <tissue>Kidney</tissue>
    </source>
</reference>
<reference key="4">
    <citation type="journal article" date="2010" name="Cell">
        <title>A tissue-specific atlas of mouse protein phosphorylation and expression.</title>
        <authorList>
            <person name="Huttlin E.L."/>
            <person name="Jedrychowski M.P."/>
            <person name="Elias J.E."/>
            <person name="Goswami T."/>
            <person name="Rad R."/>
            <person name="Beausoleil S.A."/>
            <person name="Villen J."/>
            <person name="Haas W."/>
            <person name="Sowa M.E."/>
            <person name="Gygi S.P."/>
        </authorList>
    </citation>
    <scope>IDENTIFICATION BY MASS SPECTROMETRY [LARGE SCALE ANALYSIS]</scope>
    <source>
        <tissue>Brain</tissue>
        <tissue>Kidney</tissue>
        <tissue>Liver</tissue>
        <tissue>Lung</tissue>
        <tissue>Pancreas</tissue>
        <tissue>Spleen</tissue>
    </source>
</reference>
<reference key="5">
    <citation type="journal article" date="2024" name="Science">
        <title>Pyrimidines maintain mitochondrial pyruvate oxidation to support de novo lipogenesis.</title>
        <authorList>
            <person name="Sahu U."/>
            <person name="Villa E."/>
            <person name="Reczek C.R."/>
            <person name="Zhao Z."/>
            <person name="O'Hara B.P."/>
            <person name="Torno M.D."/>
            <person name="Mishra R."/>
            <person name="Shannon W.D."/>
            <person name="Asara J.M."/>
            <person name="Gao P."/>
            <person name="Shilatifard A."/>
            <person name="Chandel N.S."/>
            <person name="Ben-Sahra I."/>
        </authorList>
    </citation>
    <scope>FUNCTION</scope>
    <scope>CATALYTIC ACTIVITY</scope>
    <scope>SUBSTRATE SPECIFICITY</scope>
    <scope>PATHWAY</scope>
</reference>
<reference key="6">
    <citation type="journal article" date="2001" name="J. Mol. Biol.">
        <title>Crystal structure of thiamin pyrophosphokinase.</title>
        <authorList>
            <person name="Timm D.E."/>
            <person name="Liu J."/>
            <person name="Baker L.-J."/>
            <person name="Harris R.A."/>
        </authorList>
    </citation>
    <scope>X-RAY CRYSTALLOGRAPHY (1.9 ANGSTROMS) OF ISOFORM 1 IN COMPLEX WITH THIAMINE</scope>
    <scope>HOMODIMERIZATION</scope>
</reference>
<reference key="7">
    <citation type="journal article" date="2006" name="J. Biol. Chem.">
        <title>Pyrithiamine as a substrate for thiamine pyrophosphokinase.</title>
        <authorList>
            <person name="Liu J.Y."/>
            <person name="Timm D.E."/>
            <person name="Hurley T.D."/>
        </authorList>
    </citation>
    <scope>X-RAY CRYSTALLOGRAPHY (2.5 ANGSTROMS) OF ISOFORM 2 IN COMPLEX WITH THIAMINE ANALOG AND AMP</scope>
    <scope>FUNCTION</scope>
</reference>
<comment type="function">
    <text evidence="2 4 5">Catalyzes the phosphorylation of thiamine to thiamine pyrophosphate (TPP) utilizing UTP and therefore links the biosynthesis of TPP to pyrimidines metabolism (PubMed:38547260). By producing thiamine pyrophosphate, a cofactor of the mitochondrial pyruvate dehydrogenase indirectly regulates pyruvate oxidation and lipogenesis (PubMed:38547260). Although it can also catalyze thiamine phosphorylation using ATP and CTP in vitro, it does so with significantly lower efficiency and without physiological relevance evidence (PubMed:10567383, PubMed:16365036, PubMed:38547260).</text>
</comment>
<comment type="catalytic activity">
    <reaction evidence="5">
        <text>thiamine + UTP = thiamine diphosphate + UMP + H(+)</text>
        <dbReference type="Rhea" id="RHEA:79423"/>
        <dbReference type="ChEBI" id="CHEBI:15378"/>
        <dbReference type="ChEBI" id="CHEBI:18385"/>
        <dbReference type="ChEBI" id="CHEBI:46398"/>
        <dbReference type="ChEBI" id="CHEBI:57865"/>
        <dbReference type="ChEBI" id="CHEBI:58937"/>
    </reaction>
    <physiologicalReaction direction="left-to-right" evidence="5">
        <dbReference type="Rhea" id="RHEA:79424"/>
    </physiologicalReaction>
</comment>
<comment type="pathway">
    <text evidence="5">Cofactor biosynthesis; thiamine diphosphate biosynthesis; thiamine diphosphate from thiamine: step 1/1.</text>
</comment>
<comment type="subunit">
    <text evidence="2 3 4">Homodimer.</text>
</comment>
<comment type="alternative products">
    <event type="alternative splicing"/>
    <isoform>
        <id>Q9R0M5-1</id>
        <name>1</name>
        <sequence type="displayed"/>
    </isoform>
    <isoform>
        <id>Q9R0M5-2</id>
        <name>2</name>
        <sequence type="described" ref="VSP_009597"/>
    </isoform>
    <isoform>
        <id>Q9R0M5-3</id>
        <name>3</name>
        <sequence type="described" ref="VSP_009595 VSP_009596"/>
    </isoform>
</comment>
<comment type="tissue specificity">
    <text evidence="2">Detected in kidney and liver, and at lower levels in heart, brain and testis.</text>
</comment>
<comment type="miscellaneous">
    <molecule>Isoform 3</molecule>
    <text evidence="9">May be due to intron retention.</text>
</comment>
<comment type="similarity">
    <text evidence="9">Belongs to the thiamine pyrophosphokinase family.</text>
</comment>
<organism>
    <name type="scientific">Mus musculus</name>
    <name type="common">Mouse</name>
    <dbReference type="NCBI Taxonomy" id="10090"/>
    <lineage>
        <taxon>Eukaryota</taxon>
        <taxon>Metazoa</taxon>
        <taxon>Chordata</taxon>
        <taxon>Craniata</taxon>
        <taxon>Vertebrata</taxon>
        <taxon>Euteleostomi</taxon>
        <taxon>Mammalia</taxon>
        <taxon>Eutheria</taxon>
        <taxon>Euarchontoglires</taxon>
        <taxon>Glires</taxon>
        <taxon>Rodentia</taxon>
        <taxon>Myomorpha</taxon>
        <taxon>Muroidea</taxon>
        <taxon>Muridae</taxon>
        <taxon>Murinae</taxon>
        <taxon>Mus</taxon>
        <taxon>Mus</taxon>
    </lineage>
</organism>
<keyword id="KW-0002">3D-structure</keyword>
<keyword id="KW-0025">Alternative splicing</keyword>
<keyword id="KW-0067">ATP-binding</keyword>
<keyword id="KW-0418">Kinase</keyword>
<keyword id="KW-0547">Nucleotide-binding</keyword>
<keyword id="KW-1185">Reference proteome</keyword>
<keyword id="KW-0808">Transferase</keyword>
<accession>Q9R0M5</accession>
<accession>Q3UWB5</accession>
<accession>Q8CAB5</accession>
<accession>Q8CEE8</accession>
<accession>Q8R1Q6</accession>
<sequence length="243" mass="27068">MEHAFTPLEPLLPTGNLKYCLVVLNQPLDARFRHLWKKALLRACADGGANHLYDLTEGERESFLPEFVSGDFDSIRPEVKEYYTKKGCDLISTPDQDHTDFTKCLQVLQRKIEEKELQVDVIVTLGGLGGRFDQIMASVNTLFQATHITPVPIIIIQKDSLIYLLQPGKHRLHVDTGMEGSWCGLIPVGQPCNQVTTTGLKWNLTNDVLGFGTLVSTSNTYDGSGLVTVETDHPLLWTMAIKS</sequence>
<feature type="chain" id="PRO_0000072648" description="Thiamine pyrophosphokinase 1">
    <location>
        <begin position="1"/>
        <end position="243"/>
    </location>
</feature>
<feature type="splice variant" id="VSP_009595" description="In isoform 3." evidence="8">
    <original>ALLRACADGGANHLYDLTEGERESF</original>
    <variation>VLGKKSQEVLAERRLIEPLGIQSSL</variation>
    <location>
        <begin position="39"/>
        <end position="63"/>
    </location>
</feature>
<feature type="splice variant" id="VSP_009596" description="In isoform 3." evidence="8">
    <location>
        <begin position="64"/>
        <end position="243"/>
    </location>
</feature>
<feature type="splice variant" id="VSP_009597" description="In isoform 2." evidence="7 8">
    <location>
        <begin position="119"/>
        <end position="167"/>
    </location>
</feature>
<feature type="sequence conflict" description="In Ref. 2; BAC25948." evidence="9" ref="2">
    <original>C</original>
    <variation>W</variation>
    <location>
        <position position="20"/>
    </location>
</feature>
<feature type="strand" evidence="12">
    <location>
        <begin position="3"/>
        <end position="5"/>
    </location>
</feature>
<feature type="helix" evidence="12">
    <location>
        <begin position="9"/>
        <end position="11"/>
    </location>
</feature>
<feature type="strand" evidence="12">
    <location>
        <begin position="12"/>
        <end position="14"/>
    </location>
</feature>
<feature type="strand" evidence="12">
    <location>
        <begin position="19"/>
        <end position="23"/>
    </location>
</feature>
<feature type="helix" evidence="12">
    <location>
        <begin position="32"/>
        <end position="38"/>
    </location>
</feature>
<feature type="strand" evidence="12">
    <location>
        <begin position="40"/>
        <end position="45"/>
    </location>
</feature>
<feature type="helix" evidence="12">
    <location>
        <begin position="48"/>
        <end position="54"/>
    </location>
</feature>
<feature type="helix" evidence="12">
    <location>
        <begin position="60"/>
        <end position="62"/>
    </location>
</feature>
<feature type="strand" evidence="12">
    <location>
        <begin position="66"/>
        <end position="70"/>
    </location>
</feature>
<feature type="strand" evidence="13">
    <location>
        <begin position="72"/>
        <end position="75"/>
    </location>
</feature>
<feature type="helix" evidence="12">
    <location>
        <begin position="77"/>
        <end position="85"/>
    </location>
</feature>
<feature type="strand" evidence="12">
    <location>
        <begin position="89"/>
        <end position="92"/>
    </location>
</feature>
<feature type="helix" evidence="12">
    <location>
        <begin position="100"/>
        <end position="114"/>
    </location>
</feature>
<feature type="strand" evidence="12">
    <location>
        <begin position="120"/>
        <end position="125"/>
    </location>
</feature>
<feature type="strand" evidence="12">
    <location>
        <begin position="128"/>
        <end position="130"/>
    </location>
</feature>
<feature type="helix" evidence="12">
    <location>
        <begin position="132"/>
        <end position="144"/>
    </location>
</feature>
<feature type="helix" evidence="12">
    <location>
        <begin position="145"/>
        <end position="147"/>
    </location>
</feature>
<feature type="strand" evidence="12">
    <location>
        <begin position="153"/>
        <end position="157"/>
    </location>
</feature>
<feature type="strand" evidence="12">
    <location>
        <begin position="160"/>
        <end position="165"/>
    </location>
</feature>
<feature type="strand" evidence="12">
    <location>
        <begin position="167"/>
        <end position="173"/>
    </location>
</feature>
<feature type="strand" evidence="12">
    <location>
        <begin position="179"/>
        <end position="186"/>
    </location>
</feature>
<feature type="strand" evidence="12">
    <location>
        <begin position="192"/>
        <end position="202"/>
    </location>
</feature>
<feature type="strand" evidence="12">
    <location>
        <begin position="205"/>
        <end position="210"/>
    </location>
</feature>
<feature type="turn" evidence="12">
    <location>
        <begin position="211"/>
        <end position="213"/>
    </location>
</feature>
<feature type="strand" evidence="12">
    <location>
        <begin position="216"/>
        <end position="219"/>
    </location>
</feature>
<feature type="strand" evidence="12">
    <location>
        <begin position="223"/>
        <end position="233"/>
    </location>
</feature>
<feature type="strand" evidence="12">
    <location>
        <begin position="235"/>
        <end position="241"/>
    </location>
</feature>
<evidence type="ECO:0000250" key="1">
    <source>
        <dbReference type="UniProtKB" id="Q9H3S4"/>
    </source>
</evidence>
<evidence type="ECO:0000269" key="2">
    <source>
    </source>
</evidence>
<evidence type="ECO:0000269" key="3">
    <source>
    </source>
</evidence>
<evidence type="ECO:0000269" key="4">
    <source>
    </source>
</evidence>
<evidence type="ECO:0000269" key="5">
    <source>
    </source>
</evidence>
<evidence type="ECO:0000303" key="6">
    <source>
    </source>
</evidence>
<evidence type="ECO:0000303" key="7">
    <source>
    </source>
</evidence>
<evidence type="ECO:0000303" key="8">
    <source>
    </source>
</evidence>
<evidence type="ECO:0000305" key="9"/>
<evidence type="ECO:0000305" key="10">
    <source>
    </source>
</evidence>
<evidence type="ECO:0000312" key="11">
    <source>
        <dbReference type="MGI" id="MGI:1352500"/>
    </source>
</evidence>
<evidence type="ECO:0007829" key="12">
    <source>
        <dbReference type="PDB" id="1IG3"/>
    </source>
</evidence>
<evidence type="ECO:0007829" key="13">
    <source>
        <dbReference type="PDB" id="2F17"/>
    </source>
</evidence>
<dbReference type="EC" id="2.7.6.-" evidence="1"/>
<dbReference type="EMBL" id="AB027568">
    <property type="protein sequence ID" value="BAA87040.1"/>
    <property type="molecule type" value="mRNA"/>
</dbReference>
<dbReference type="EMBL" id="AK028431">
    <property type="protein sequence ID" value="BAC25948.1"/>
    <property type="molecule type" value="mRNA"/>
</dbReference>
<dbReference type="EMBL" id="AK035044">
    <property type="protein sequence ID" value="BAC28923.1"/>
    <property type="molecule type" value="mRNA"/>
</dbReference>
<dbReference type="EMBL" id="AK039131">
    <property type="protein sequence ID" value="BAC30248.1"/>
    <property type="molecule type" value="mRNA"/>
</dbReference>
<dbReference type="EMBL" id="AK136486">
    <property type="protein sequence ID" value="BAE23001.1"/>
    <property type="molecule type" value="mRNA"/>
</dbReference>
<dbReference type="EMBL" id="BC015246">
    <property type="protein sequence ID" value="AAH15246.1"/>
    <property type="molecule type" value="mRNA"/>
</dbReference>
<dbReference type="EMBL" id="BC023354">
    <property type="protein sequence ID" value="AAH23354.1"/>
    <property type="molecule type" value="mRNA"/>
</dbReference>
<dbReference type="CCDS" id="CCDS39474.1">
    <molecule id="Q9R0M5-1"/>
</dbReference>
<dbReference type="CCDS" id="CCDS80529.1">
    <molecule id="Q9R0M5-2"/>
</dbReference>
<dbReference type="RefSeq" id="NP_001298040.1">
    <molecule id="Q9R0M5-2"/>
    <property type="nucleotide sequence ID" value="NM_001311111.1"/>
</dbReference>
<dbReference type="RefSeq" id="NP_038889.1">
    <molecule id="Q9R0M5-1"/>
    <property type="nucleotide sequence ID" value="NM_013861.4"/>
</dbReference>
<dbReference type="PDB" id="1IG3">
    <property type="method" value="X-ray"/>
    <property type="resolution" value="1.90 A"/>
    <property type="chains" value="A/B=1-243"/>
</dbReference>
<dbReference type="PDB" id="2F17">
    <property type="method" value="X-ray"/>
    <property type="resolution" value="2.50 A"/>
    <property type="chains" value="A/B=1-243"/>
</dbReference>
<dbReference type="PDBsum" id="1IG3"/>
<dbReference type="PDBsum" id="2F17"/>
<dbReference type="SMR" id="Q9R0M5"/>
<dbReference type="FunCoup" id="Q9R0M5">
    <property type="interactions" value="718"/>
</dbReference>
<dbReference type="STRING" id="10090.ENSMUSP00000065631"/>
<dbReference type="PhosphoSitePlus" id="Q9R0M5"/>
<dbReference type="jPOST" id="Q9R0M5"/>
<dbReference type="PaxDb" id="10090-ENSMUSP00000065631"/>
<dbReference type="PeptideAtlas" id="Q9R0M5"/>
<dbReference type="ProteomicsDB" id="297506">
    <molecule id="Q9R0M5-1"/>
</dbReference>
<dbReference type="ProteomicsDB" id="297507">
    <molecule id="Q9R0M5-2"/>
</dbReference>
<dbReference type="ProteomicsDB" id="297508">
    <molecule id="Q9R0M5-3"/>
</dbReference>
<dbReference type="Pumba" id="Q9R0M5"/>
<dbReference type="Antibodypedia" id="18523">
    <property type="antibodies" value="172 antibodies from 25 providers"/>
</dbReference>
<dbReference type="DNASU" id="29807"/>
<dbReference type="Ensembl" id="ENSMUST00000067888.14">
    <molecule id="Q9R0M5-1"/>
    <property type="protein sequence ID" value="ENSMUSP00000065631.8"/>
    <property type="gene ID" value="ENSMUSG00000029735.18"/>
</dbReference>
<dbReference type="Ensembl" id="ENSMUST00000114644.8">
    <molecule id="Q9R0M5-2"/>
    <property type="protein sequence ID" value="ENSMUSP00000110291.3"/>
    <property type="gene ID" value="ENSMUSG00000029735.18"/>
</dbReference>
<dbReference type="GeneID" id="29807"/>
<dbReference type="KEGG" id="mmu:29807"/>
<dbReference type="UCSC" id="uc009bsq.1">
    <molecule id="Q9R0M5-1"/>
    <property type="organism name" value="mouse"/>
</dbReference>
<dbReference type="UCSC" id="uc009bsr.1">
    <molecule id="Q9R0M5-2"/>
    <property type="organism name" value="mouse"/>
</dbReference>
<dbReference type="AGR" id="MGI:1352500"/>
<dbReference type="CTD" id="27010"/>
<dbReference type="MGI" id="MGI:1352500">
    <property type="gene designation" value="Tpk1"/>
</dbReference>
<dbReference type="VEuPathDB" id="HostDB:ENSMUSG00000029735"/>
<dbReference type="eggNOG" id="KOG3153">
    <property type="taxonomic scope" value="Eukaryota"/>
</dbReference>
<dbReference type="GeneTree" id="ENSGT00390000016016"/>
<dbReference type="HOGENOM" id="CLU_044237_0_1_1"/>
<dbReference type="InParanoid" id="Q9R0M5"/>
<dbReference type="OMA" id="TDMCKAL"/>
<dbReference type="OrthoDB" id="25149at2759"/>
<dbReference type="PhylomeDB" id="Q9R0M5"/>
<dbReference type="TreeFam" id="TF313224"/>
<dbReference type="Reactome" id="R-MMU-196819">
    <property type="pathway name" value="Vitamin B1 (thiamin) metabolism"/>
</dbReference>
<dbReference type="UniPathway" id="UPA00060">
    <property type="reaction ID" value="UER00597"/>
</dbReference>
<dbReference type="BioGRID-ORCS" id="29807">
    <property type="hits" value="7 hits in 79 CRISPR screens"/>
</dbReference>
<dbReference type="ChiTaRS" id="Tpk1">
    <property type="organism name" value="mouse"/>
</dbReference>
<dbReference type="EvolutionaryTrace" id="Q9R0M5"/>
<dbReference type="PRO" id="PR:Q9R0M5"/>
<dbReference type="Proteomes" id="UP000000589">
    <property type="component" value="Chromosome 6"/>
</dbReference>
<dbReference type="RNAct" id="Q9R0M5">
    <property type="molecule type" value="protein"/>
</dbReference>
<dbReference type="Bgee" id="ENSMUSG00000029735">
    <property type="expression patterns" value="Expressed in right kidney and 161 other cell types or tissues"/>
</dbReference>
<dbReference type="GO" id="GO:0005829">
    <property type="term" value="C:cytosol"/>
    <property type="evidence" value="ECO:0000314"/>
    <property type="project" value="MGI"/>
</dbReference>
<dbReference type="GO" id="GO:0005524">
    <property type="term" value="F:ATP binding"/>
    <property type="evidence" value="ECO:0007669"/>
    <property type="project" value="UniProtKB-KW"/>
</dbReference>
<dbReference type="GO" id="GO:0042802">
    <property type="term" value="F:identical protein binding"/>
    <property type="evidence" value="ECO:0007669"/>
    <property type="project" value="Ensembl"/>
</dbReference>
<dbReference type="GO" id="GO:0016301">
    <property type="term" value="F:kinase activity"/>
    <property type="evidence" value="ECO:0007669"/>
    <property type="project" value="UniProtKB-KW"/>
</dbReference>
<dbReference type="GO" id="GO:0030975">
    <property type="term" value="F:thiamine binding"/>
    <property type="evidence" value="ECO:0007669"/>
    <property type="project" value="InterPro"/>
</dbReference>
<dbReference type="GO" id="GO:0004788">
    <property type="term" value="F:thiamine diphosphokinase activity"/>
    <property type="evidence" value="ECO:0000314"/>
    <property type="project" value="MGI"/>
</dbReference>
<dbReference type="GO" id="GO:0141200">
    <property type="term" value="F:UTP thiamine diphosphokinase activity"/>
    <property type="evidence" value="ECO:0007669"/>
    <property type="project" value="Ensembl"/>
</dbReference>
<dbReference type="GO" id="GO:0010510">
    <property type="term" value="P:regulation of acetyl-CoA biosynthetic process from pyruvate"/>
    <property type="evidence" value="ECO:0007669"/>
    <property type="project" value="Ensembl"/>
</dbReference>
<dbReference type="GO" id="GO:0009229">
    <property type="term" value="P:thiamine diphosphate biosynthetic process"/>
    <property type="evidence" value="ECO:0000314"/>
    <property type="project" value="MGI"/>
</dbReference>
<dbReference type="GO" id="GO:0006772">
    <property type="term" value="P:thiamine metabolic process"/>
    <property type="evidence" value="ECO:0000314"/>
    <property type="project" value="MGI"/>
</dbReference>
<dbReference type="CDD" id="cd07995">
    <property type="entry name" value="TPK"/>
    <property type="match status" value="1"/>
</dbReference>
<dbReference type="FunFam" id="3.40.50.10240:FF:000006">
    <property type="entry name" value="Thiamin pyrophosphokinase 1"/>
    <property type="match status" value="1"/>
</dbReference>
<dbReference type="FunFam" id="2.60.120.320:FF:000002">
    <property type="entry name" value="Thiamine pyrophosphokinase"/>
    <property type="match status" value="1"/>
</dbReference>
<dbReference type="Gene3D" id="3.40.50.10240">
    <property type="entry name" value="Thiamin pyrophosphokinase, catalytic domain"/>
    <property type="match status" value="1"/>
</dbReference>
<dbReference type="Gene3D" id="2.60.120.320">
    <property type="entry name" value="Thiamin pyrophosphokinase, thiamin-binding domain"/>
    <property type="match status" value="1"/>
</dbReference>
<dbReference type="InterPro" id="IPR006282">
    <property type="entry name" value="Thi_PPkinase"/>
</dbReference>
<dbReference type="InterPro" id="IPR016966">
    <property type="entry name" value="Thiamin_pyrophosphokinase_euk"/>
</dbReference>
<dbReference type="InterPro" id="IPR007373">
    <property type="entry name" value="Thiamin_PyroPKinase_B1-bd"/>
</dbReference>
<dbReference type="InterPro" id="IPR036371">
    <property type="entry name" value="TPK_B1-bd_sf"/>
</dbReference>
<dbReference type="InterPro" id="IPR007371">
    <property type="entry name" value="TPK_catalytic"/>
</dbReference>
<dbReference type="InterPro" id="IPR036759">
    <property type="entry name" value="TPK_catalytic_sf"/>
</dbReference>
<dbReference type="NCBIfam" id="TIGR01378">
    <property type="entry name" value="thi_PPkinase"/>
    <property type="match status" value="1"/>
</dbReference>
<dbReference type="PANTHER" id="PTHR13622">
    <property type="entry name" value="THIAMIN PYROPHOSPHOKINASE"/>
    <property type="match status" value="1"/>
</dbReference>
<dbReference type="PANTHER" id="PTHR13622:SF8">
    <property type="entry name" value="THIAMIN PYROPHOSPHOKINASE 1"/>
    <property type="match status" value="1"/>
</dbReference>
<dbReference type="Pfam" id="PF04265">
    <property type="entry name" value="TPK_B1_binding"/>
    <property type="match status" value="1"/>
</dbReference>
<dbReference type="Pfam" id="PF04263">
    <property type="entry name" value="TPK_catalytic"/>
    <property type="match status" value="1"/>
</dbReference>
<dbReference type="PIRSF" id="PIRSF031057">
    <property type="entry name" value="Thiamin_pyrophosphokinase"/>
    <property type="match status" value="1"/>
</dbReference>
<dbReference type="SMART" id="SM00983">
    <property type="entry name" value="TPK_B1_binding"/>
    <property type="match status" value="1"/>
</dbReference>
<dbReference type="SUPFAM" id="SSF63999">
    <property type="entry name" value="Thiamin pyrophosphokinase, catalytic domain"/>
    <property type="match status" value="1"/>
</dbReference>
<dbReference type="SUPFAM" id="SSF63862">
    <property type="entry name" value="Thiamin pyrophosphokinase, substrate-binding domain"/>
    <property type="match status" value="1"/>
</dbReference>
<proteinExistence type="evidence at protein level"/>
<protein>
    <recommendedName>
        <fullName evidence="10">Thiamine pyrophosphokinase 1</fullName>
        <shortName evidence="6">mTPK1</shortName>
        <ecNumber evidence="1">2.7.6.-</ecNumber>
    </recommendedName>
    <alternativeName>
        <fullName evidence="6">Thiamin pyrophosphokinase 1</fullName>
    </alternativeName>
</protein>
<name>TPK1_MOUSE</name>